<feature type="chain" id="PRO_0000202539" description="SAGA complex subunit SGF29">
    <location>
        <begin position="1"/>
        <end position="259"/>
    </location>
</feature>
<feature type="domain" description="SGF29 C-terminal" evidence="1">
    <location>
        <begin position="121"/>
        <end position="255"/>
    </location>
</feature>
<feature type="region of interest" description="Disordered" evidence="2">
    <location>
        <begin position="75"/>
        <end position="102"/>
    </location>
</feature>
<feature type="region of interest" description="Histone H3K4me3 N-terminus binding" evidence="8">
    <location>
        <begin position="163"/>
        <end position="165"/>
    </location>
</feature>
<feature type="region of interest" description="Histone H3K4me3 N-terminus binding" evidence="8">
    <location>
        <begin position="207"/>
        <end position="210"/>
    </location>
</feature>
<feature type="region of interest" description="Histone H3K4me3 binding" evidence="8">
    <location>
        <begin position="229"/>
        <end position="232"/>
    </location>
</feature>
<feature type="site" description="Histone H3K4me3 binding" evidence="8">
    <location>
        <position position="205"/>
    </location>
</feature>
<feature type="site" description="Histone H3K4me3 binding" evidence="8">
    <location>
        <position position="212"/>
    </location>
</feature>
<feature type="modified residue" description="Phosphoserine" evidence="19 20 21 22">
    <location>
        <position position="139"/>
    </location>
</feature>
<feature type="mutagenesis site" description="Reduces histone H3 acetylation." evidence="8">
    <original>D</original>
    <variation>A</variation>
    <location>
        <position position="163"/>
    </location>
</feature>
<feature type="mutagenesis site" description="Reduces histone H3 acetylation." evidence="8">
    <original>E</original>
    <variation>A</variation>
    <location>
        <position position="165"/>
    </location>
</feature>
<feature type="mutagenesis site" description="Reduces histone H3 acetylation." evidence="8">
    <original>Y</original>
    <variation>A</variation>
    <location>
        <position position="205"/>
    </location>
</feature>
<feature type="mutagenesis site" description="Reduces histone H3 acetylation." evidence="8">
    <original>T</original>
    <variation>A</variation>
    <location>
        <position position="210"/>
    </location>
</feature>
<feature type="mutagenesis site" description="Reduces histone H3 acetylation." evidence="8">
    <original>Y</original>
    <variation>A</variation>
    <location>
        <position position="212"/>
    </location>
</feature>
<feature type="mutagenesis site" description="Reduces histone H3 acetylation." evidence="8">
    <original>F</original>
    <variation>A</variation>
    <location>
        <position position="229"/>
    </location>
</feature>
<feature type="strand" evidence="23">
    <location>
        <begin position="105"/>
        <end position="107"/>
    </location>
</feature>
<feature type="strand" evidence="24">
    <location>
        <begin position="118"/>
        <end position="120"/>
    </location>
</feature>
<feature type="strand" evidence="24">
    <location>
        <begin position="130"/>
        <end position="133"/>
    </location>
</feature>
<feature type="turn" evidence="25">
    <location>
        <begin position="140"/>
        <end position="142"/>
    </location>
</feature>
<feature type="strand" evidence="24">
    <location>
        <begin position="144"/>
        <end position="153"/>
    </location>
</feature>
<feature type="turn" evidence="24">
    <location>
        <begin position="154"/>
        <end position="157"/>
    </location>
</feature>
<feature type="strand" evidence="24">
    <location>
        <begin position="158"/>
        <end position="163"/>
    </location>
</feature>
<feature type="strand" evidence="24">
    <location>
        <begin position="174"/>
        <end position="178"/>
    </location>
</feature>
<feature type="helix" evidence="24">
    <location>
        <begin position="180"/>
        <end position="182"/>
    </location>
</feature>
<feature type="strand" evidence="24">
    <location>
        <begin position="183"/>
        <end position="186"/>
    </location>
</feature>
<feature type="strand" evidence="24">
    <location>
        <begin position="200"/>
        <end position="204"/>
    </location>
</feature>
<feature type="strand" evidence="24">
    <location>
        <begin position="209"/>
        <end position="219"/>
    </location>
</feature>
<feature type="strand" evidence="24">
    <location>
        <begin position="225"/>
        <end position="229"/>
    </location>
</feature>
<feature type="strand" evidence="25">
    <location>
        <begin position="232"/>
        <end position="234"/>
    </location>
</feature>
<feature type="strand" evidence="24">
    <location>
        <begin position="239"/>
        <end position="241"/>
    </location>
</feature>
<feature type="helix" evidence="24">
    <location>
        <begin position="243"/>
        <end position="245"/>
    </location>
</feature>
<feature type="strand" evidence="24">
    <location>
        <begin position="246"/>
        <end position="248"/>
    </location>
</feature>
<feature type="helix" evidence="24">
    <location>
        <begin position="250"/>
        <end position="253"/>
    </location>
</feature>
<accession>P25554</accession>
<accession>D6VR02</accession>
<accession>P87008</accession>
<protein>
    <recommendedName>
        <fullName>SAGA complex subunit SGF29</fullName>
    </recommendedName>
    <alternativeName>
        <fullName>29 kDa SAGA-associated factor</fullName>
    </alternativeName>
    <alternativeName>
        <fullName>SAGA histone acetyltransferase complex 29 kDa subunit</fullName>
    </alternativeName>
    <alternativeName>
        <fullName>SAGA-associated factor 29</fullName>
    </alternativeName>
</protein>
<keyword id="KW-0002">3D-structure</keyword>
<keyword id="KW-0156">Chromatin regulator</keyword>
<keyword id="KW-0539">Nucleus</keyword>
<keyword id="KW-0597">Phosphoprotein</keyword>
<keyword id="KW-1185">Reference proteome</keyword>
<keyword id="KW-0804">Transcription</keyword>
<keyword id="KW-0805">Transcription regulation</keyword>
<gene>
    <name type="primary">SGF29</name>
    <name type="ordered locus">YCL010C</name>
    <name type="ORF">YCL10C</name>
</gene>
<proteinExistence type="evidence at protein level"/>
<reference key="1">
    <citation type="journal article" date="1992" name="Nature">
        <title>The complete DNA sequence of yeast chromosome III.</title>
        <authorList>
            <person name="Oliver S.G."/>
            <person name="van der Aart Q.J.M."/>
            <person name="Agostoni-Carbone M.L."/>
            <person name="Aigle M."/>
            <person name="Alberghina L."/>
            <person name="Alexandraki D."/>
            <person name="Antoine G."/>
            <person name="Anwar R."/>
            <person name="Ballesta J.P.G."/>
            <person name="Benit P."/>
            <person name="Berben G."/>
            <person name="Bergantino E."/>
            <person name="Biteau N."/>
            <person name="Bolle P.-A."/>
            <person name="Bolotin-Fukuhara M."/>
            <person name="Brown A."/>
            <person name="Brown A.J.P."/>
            <person name="Buhler J.-M."/>
            <person name="Carcano C."/>
            <person name="Carignani G."/>
            <person name="Cederberg H."/>
            <person name="Chanet R."/>
            <person name="Contreras R."/>
            <person name="Crouzet M."/>
            <person name="Daignan-Fornier B."/>
            <person name="Defoor E."/>
            <person name="Delgado M.D."/>
            <person name="Demolder J."/>
            <person name="Doira C."/>
            <person name="Dubois E."/>
            <person name="Dujon B."/>
            <person name="Duesterhoeft A."/>
            <person name="Erdmann D."/>
            <person name="Esteban M."/>
            <person name="Fabre F."/>
            <person name="Fairhead C."/>
            <person name="Faye G."/>
            <person name="Feldmann H."/>
            <person name="Fiers W."/>
            <person name="Francingues-Gaillard M.-C."/>
            <person name="Franco L."/>
            <person name="Frontali L."/>
            <person name="Fukuhara H."/>
            <person name="Fuller L.J."/>
            <person name="Galland P."/>
            <person name="Gent M.E."/>
            <person name="Gigot D."/>
            <person name="Gilliquet V."/>
            <person name="Glansdorff N."/>
            <person name="Goffeau A."/>
            <person name="Grenson M."/>
            <person name="Grisanti P."/>
            <person name="Grivell L.A."/>
            <person name="de Haan M."/>
            <person name="Haasemann M."/>
            <person name="Hatat D."/>
            <person name="Hoenicka J."/>
            <person name="Hegemann J.H."/>
            <person name="Herbert C.J."/>
            <person name="Hilger F."/>
            <person name="Hohmann S."/>
            <person name="Hollenberg C.P."/>
            <person name="Huse K."/>
            <person name="Iborra F."/>
            <person name="Indge K.J."/>
            <person name="Isono K."/>
            <person name="Jacq C."/>
            <person name="Jacquet M."/>
            <person name="James C.M."/>
            <person name="Jauniaux J.-C."/>
            <person name="Jia Y."/>
            <person name="Jimenez A."/>
            <person name="Kelly A."/>
            <person name="Kleinhans U."/>
            <person name="Kreisl P."/>
            <person name="Lanfranchi G."/>
            <person name="Lewis C."/>
            <person name="van der Linden C.G."/>
            <person name="Lucchini G."/>
            <person name="Lutzenkirchen K."/>
            <person name="Maat M.J."/>
            <person name="Mallet L."/>
            <person name="Mannhaupt G."/>
            <person name="Martegani E."/>
            <person name="Mathieu A."/>
            <person name="Maurer C.T.C."/>
            <person name="McConnell D."/>
            <person name="McKee R.A."/>
            <person name="Messenguy F."/>
            <person name="Mewes H.-W."/>
            <person name="Molemans F."/>
            <person name="Montague M.A."/>
            <person name="Muzi Falconi M."/>
            <person name="Navas L."/>
            <person name="Newlon C.S."/>
            <person name="Noone D."/>
            <person name="Pallier C."/>
            <person name="Panzeri L."/>
            <person name="Pearson B.M."/>
            <person name="Perea J."/>
            <person name="Philippsen P."/>
            <person name="Pierard A."/>
            <person name="Planta R.J."/>
            <person name="Plevani P."/>
            <person name="Poetsch B."/>
            <person name="Pohl F.M."/>
            <person name="Purnelle B."/>
            <person name="Ramezani Rad M."/>
            <person name="Rasmussen S.W."/>
            <person name="Raynal A."/>
            <person name="Remacha M.A."/>
            <person name="Richterich P."/>
            <person name="Roberts A.B."/>
            <person name="Rodriguez F."/>
            <person name="Sanz E."/>
            <person name="Schaaff-Gerstenschlaeger I."/>
            <person name="Scherens B."/>
            <person name="Schweitzer B."/>
            <person name="Shu Y."/>
            <person name="Skala J."/>
            <person name="Slonimski P.P."/>
            <person name="Sor F."/>
            <person name="Soustelle C."/>
            <person name="Spiegelberg R."/>
            <person name="Stateva L.I."/>
            <person name="Steensma H.Y."/>
            <person name="Steiner S."/>
            <person name="Thierry A."/>
            <person name="Thireos G."/>
            <person name="Tzermia M."/>
            <person name="Urrestarazu L.A."/>
            <person name="Valle G."/>
            <person name="Vetter I."/>
            <person name="van Vliet-Reedijk J.C."/>
            <person name="Voet M."/>
            <person name="Volckaert G."/>
            <person name="Vreken P."/>
            <person name="Wang H."/>
            <person name="Warmington J.R."/>
            <person name="von Wettstein D."/>
            <person name="Wicksteed B.L."/>
            <person name="Wilson C."/>
            <person name="Wurst H."/>
            <person name="Xu G."/>
            <person name="Yoshikawa A."/>
            <person name="Zimmermann F.K."/>
            <person name="Sgouros J.G."/>
        </authorList>
    </citation>
    <scope>NUCLEOTIDE SEQUENCE [LARGE SCALE GENOMIC DNA]</scope>
    <source>
        <strain>ATCC 204508 / S288c</strain>
    </source>
</reference>
<reference key="2">
    <citation type="submission" date="1996-01" db="EMBL/GenBank/DDBJ databases">
        <authorList>
            <person name="Gromadka R."/>
        </authorList>
    </citation>
    <scope>SEQUENCE REVISION</scope>
</reference>
<reference key="3">
    <citation type="journal article" date="2014" name="G3 (Bethesda)">
        <title>The reference genome sequence of Saccharomyces cerevisiae: Then and now.</title>
        <authorList>
            <person name="Engel S.R."/>
            <person name="Dietrich F.S."/>
            <person name="Fisk D.G."/>
            <person name="Binkley G."/>
            <person name="Balakrishnan R."/>
            <person name="Costanzo M.C."/>
            <person name="Dwight S.S."/>
            <person name="Hitz B.C."/>
            <person name="Karra K."/>
            <person name="Nash R.S."/>
            <person name="Weng S."/>
            <person name="Wong E.D."/>
            <person name="Lloyd P."/>
            <person name="Skrzypek M.S."/>
            <person name="Miyasato S.R."/>
            <person name="Simison M."/>
            <person name="Cherry J.M."/>
        </authorList>
    </citation>
    <scope>GENOME REANNOTATION</scope>
    <source>
        <strain>ATCC 204508 / S288c</strain>
    </source>
</reference>
<reference key="4">
    <citation type="journal article" date="1999" name="J. Biol. Chem.">
        <title>Expanded lysine acetylation specificity of Gcn5 in native complexes.</title>
        <authorList>
            <person name="Grant P.A."/>
            <person name="Eberharter A."/>
            <person name="John S."/>
            <person name="Cook R.G."/>
            <person name="Turner B.M."/>
            <person name="Workman J.L."/>
        </authorList>
    </citation>
    <scope>FUNCTION IN HISTONE ACETYLATION AT THE SAGA COMPLEX</scope>
</reference>
<reference key="5">
    <citation type="journal article" date="2000" name="Nature">
        <title>Redundant roles for the TFIID and SAGA complexes in global transcription.</title>
        <authorList>
            <person name="Lee T.I."/>
            <person name="Causton H.C."/>
            <person name="Holstege F.C."/>
            <person name="Shen W.C."/>
            <person name="Hannett N."/>
            <person name="Jennings E.G."/>
            <person name="Winston F."/>
            <person name="Green M.R."/>
            <person name="Young R.A."/>
        </authorList>
    </citation>
    <scope>FUNCTION</scope>
</reference>
<reference key="6">
    <citation type="journal article" date="2002" name="Mol. Cell. Biol.">
        <title>Proteomics of the eukaryotic transcription machinery: identification of proteins associated with components of yeast TFIID by multidimensional mass spectrometry.</title>
        <authorList>
            <person name="Sanders S.L."/>
            <person name="Jennings J."/>
            <person name="Canutescu A."/>
            <person name="Link A.J."/>
            <person name="Weil P.A."/>
        </authorList>
    </citation>
    <scope>IDENTIFICATION IN THE SAGA COMPLEX</scope>
</reference>
<reference key="7">
    <citation type="journal article" date="2003" name="Nature">
        <title>Global analysis of protein expression in yeast.</title>
        <authorList>
            <person name="Ghaemmaghami S."/>
            <person name="Huh W.-K."/>
            <person name="Bower K."/>
            <person name="Howson R.W."/>
            <person name="Belle A."/>
            <person name="Dephoure N."/>
            <person name="O'Shea E.K."/>
            <person name="Weissman J.S."/>
        </authorList>
    </citation>
    <scope>LEVEL OF PROTEIN EXPRESSION [LARGE SCALE ANALYSIS]</scope>
</reference>
<reference key="8">
    <citation type="journal article" date="2005" name="Mol. Cell. Proteomics">
        <title>Quantitative phosphoproteomics applied to the yeast pheromone signaling pathway.</title>
        <authorList>
            <person name="Gruhler A."/>
            <person name="Olsen J.V."/>
            <person name="Mohammed S."/>
            <person name="Mortensen P."/>
            <person name="Faergeman N.J."/>
            <person name="Mann M."/>
            <person name="Jensen O.N."/>
        </authorList>
    </citation>
    <scope>PHOSPHORYLATION [LARGE SCALE ANALYSIS] AT SER-139</scope>
    <scope>IDENTIFICATION BY MASS SPECTROMETRY [LARGE SCALE ANALYSIS]</scope>
    <source>
        <strain>YAL6B</strain>
    </source>
</reference>
<reference key="9">
    <citation type="journal article" date="2005" name="Nature">
        <title>Chd1 chromodomain links histone H3 methylation with SAGA- and SLIK-dependent acetylation.</title>
        <authorList>
            <person name="Pray-Grant M.G."/>
            <person name="Daniel J.A."/>
            <person name="Schieltz D."/>
            <person name="Yates J.R. III"/>
            <person name="Grant P.A."/>
        </authorList>
    </citation>
    <scope>FUNCTION</scope>
    <scope>IDENTIFICATION IN THE SLIK COMPLEX</scope>
</reference>
<reference key="10">
    <citation type="journal article" date="2007" name="J. Proteome Res.">
        <title>Large-scale phosphorylation analysis of alpha-factor-arrested Saccharomyces cerevisiae.</title>
        <authorList>
            <person name="Li X."/>
            <person name="Gerber S.A."/>
            <person name="Rudner A.D."/>
            <person name="Beausoleil S.A."/>
            <person name="Haas W."/>
            <person name="Villen J."/>
            <person name="Elias J.E."/>
            <person name="Gygi S.P."/>
        </authorList>
    </citation>
    <scope>PHOSPHORYLATION [LARGE SCALE ANALYSIS] AT SER-139</scope>
    <scope>IDENTIFICATION BY MASS SPECTROMETRY [LARGE SCALE ANALYSIS]</scope>
    <source>
        <strain>ADR376</strain>
    </source>
</reference>
<reference key="11">
    <citation type="journal article" date="2008" name="Mol. Cell. Proteomics">
        <title>A multidimensional chromatography technology for in-depth phosphoproteome analysis.</title>
        <authorList>
            <person name="Albuquerque C.P."/>
            <person name="Smolka M.B."/>
            <person name="Payne S.H."/>
            <person name="Bafna V."/>
            <person name="Eng J."/>
            <person name="Zhou H."/>
        </authorList>
    </citation>
    <scope>PHOSPHORYLATION [LARGE SCALE ANALYSIS] AT SER-139</scope>
    <scope>IDENTIFICATION BY MASS SPECTROMETRY [LARGE SCALE ANALYSIS]</scope>
</reference>
<reference key="12">
    <citation type="journal article" date="2009" name="Science">
        <title>Global analysis of Cdk1 substrate phosphorylation sites provides insights into evolution.</title>
        <authorList>
            <person name="Holt L.J."/>
            <person name="Tuch B.B."/>
            <person name="Villen J."/>
            <person name="Johnson A.D."/>
            <person name="Gygi S.P."/>
            <person name="Morgan D.O."/>
        </authorList>
    </citation>
    <scope>PHOSPHORYLATION [LARGE SCALE ANALYSIS] AT SER-139</scope>
    <scope>IDENTIFICATION BY MASS SPECTROMETRY [LARGE SCALE ANALYSIS]</scope>
</reference>
<reference key="13">
    <citation type="journal article" date="2011" name="Mol. Syst. Biol.">
        <title>Combinatorial depletion analysis to assemble the network architecture of the SAGA and ADA chromatin remodeling complexes.</title>
        <authorList>
            <person name="Lee K.K."/>
            <person name="Sardiu M.E."/>
            <person name="Swanson S.K."/>
            <person name="Gilmore J.M."/>
            <person name="Torok M."/>
            <person name="Grant P.A."/>
            <person name="Florens L."/>
            <person name="Workman J.L."/>
            <person name="Washburn M.P."/>
        </authorList>
    </citation>
    <scope>SUBUNIT</scope>
</reference>
<reference key="14">
    <citation type="journal article" date="2012" name="Biochemistry">
        <title>Sgf29p facilitates the recruitment of TATA box binding protein but does not alter SAGA's global structural integrity in vivo.</title>
        <authorList>
            <person name="Shukla A."/>
            <person name="Lahudkar S."/>
            <person name="Durairaj G."/>
            <person name="Bhaumik S.R."/>
        </authorList>
    </citation>
    <scope>FUNCTION</scope>
</reference>
<reference key="15">
    <citation type="journal article" date="2014" name="EMBO J.">
        <title>Architecture of the Saccharomyces cerevisiae SAGA transcription coactivator complex.</title>
        <authorList>
            <person name="Han Y."/>
            <person name="Luo J."/>
            <person name="Ranish J."/>
            <person name="Hahn S."/>
        </authorList>
    </citation>
    <scope>SUBUNIT</scope>
</reference>
<reference key="16">
    <citation type="journal article" date="2014" name="J. Biochem.">
        <title>The N-terminus and Tudor domains of Sgf29 are important for its heterochromatin boundary formation function.</title>
        <authorList>
            <person name="Kamata K."/>
            <person name="Goswami G."/>
            <person name="Kashio S."/>
            <person name="Urano T."/>
            <person name="Nakagawa R."/>
            <person name="Uchida H."/>
            <person name="Oki M."/>
        </authorList>
    </citation>
    <scope>FUNCTION</scope>
</reference>
<reference key="17">
    <citation type="journal article" date="2017" name="Mol. Cell">
        <title>SAGA is a general cofactor for RNA polymerase II transcription.</title>
        <authorList>
            <person name="Baptista T."/>
            <person name="Gruenberg S."/>
            <person name="Minoungou N."/>
            <person name="Koster M.J.E."/>
            <person name="Timmers H.T.M."/>
            <person name="Hahn S."/>
            <person name="Devys D."/>
            <person name="Tora L."/>
        </authorList>
    </citation>
    <scope>FUNCTION</scope>
</reference>
<reference key="18">
    <citation type="journal article" date="2021" name="J. Biol. Chem.">
        <title>SAGA and SAGA-like SLIK transcriptional coactivators are structurally and biochemically equivalent.</title>
        <authorList>
            <person name="Adamus K."/>
            <person name="Reboul C."/>
            <person name="Voss J."/>
            <person name="Huang C."/>
            <person name="Schittenhelm R.B."/>
            <person name="Le S.N."/>
            <person name="Ellisdon A.M."/>
            <person name="Elmlund H."/>
            <person name="Boudes M."/>
            <person name="Elmlund D."/>
        </authorList>
    </citation>
    <scope>FUNCTION</scope>
    <scope>SUBUNIT</scope>
</reference>
<reference key="19">
    <citation type="journal article" date="2004" name="Mol. Cell">
        <title>Molecular architecture of the S. cerevisiae SAGA complex.</title>
        <authorList>
            <person name="Wu P.Y."/>
            <person name="Ruhlmann C."/>
            <person name="Winston F."/>
            <person name="Schultz P."/>
        </authorList>
    </citation>
    <scope>3D-STRUCTURE MODELING OF THE SAGA COMPLEX</scope>
</reference>
<reference evidence="16 17 18" key="20">
    <citation type="journal article" date="2011" name="EMBO J.">
        <title>Sgf29 binds histone H3K4me2/3 and is required for SAGA complex recruitment and histone H3 acetylation.</title>
        <authorList>
            <person name="Bian C."/>
            <person name="Xu C."/>
            <person name="Ruan J."/>
            <person name="Lee K.K."/>
            <person name="Burke T.L."/>
            <person name="Tempel W."/>
            <person name="Barsyte D."/>
            <person name="Li J."/>
            <person name="Wu M."/>
            <person name="Zhou B.O."/>
            <person name="Fleharty B.E."/>
            <person name="Paulson A."/>
            <person name="Allali-Hassani A."/>
            <person name="Zhou J.Q."/>
            <person name="Mer G."/>
            <person name="Grant P.A."/>
            <person name="Workman J.L."/>
            <person name="Zang J."/>
            <person name="Min J."/>
        </authorList>
    </citation>
    <scope>X-RAY CRYSTALLOGRAPHY (1.48 ANGSTROMS) OF 105-259 IN COMPLEX WITH H3K4ME3 PEPTIDE</scope>
    <scope>INTERACTION WITH H3K4ME2 AND H3K4ME3</scope>
    <scope>FUNCTION</scope>
    <scope>DOMAIN</scope>
    <scope>MUTAGENESIS OF ASP-163; GLU-165; TYR-205; THR-210; TYR-212 AND PHE-229</scope>
</reference>
<comment type="function">
    <text evidence="3 4 7 8 10 11 12 13 14">Chromatin reader component of the transcription coactivator SAGA complex. SAGA acts as a general cofactor required for essentially all RNA polymerase II transcription (PubMed:10026213, PubMed:10864329, PubMed:15647753, PubMed:25216679, PubMed:28918903). At the promoters, SAGA is required for transcription pre-initiation complex (PIC) recruitment. It influences RNA polymerase II transcriptional activity through different activities such as TBP interaction (via core/TAF module) and promoter selectivity, interaction with transcription activators (via Tra1/SPT module), and chromatin modification through histone acetylation (via HAT module) and deubiquitination (via DUB module) (PubMed:22224423). SAGA preferentially acetylates histones H3 (to form H3K9ac, H3K14ac, H3K18ac and H3K23ac) and H2B and deubiquitinates histone H2B (PubMed:10026213). SAGA interacts with DNA via upstream activating sequences (UASs) (PubMed:28918903). Also identified in a modified version of SAGA named SALSA or SLIK (PubMed:15647753). The cleavage of SPT7 and the absence of the SPT8 subunit in SLIK neither drive any major conformational differences in its structure compared with SAGA, nor significantly affect HAT, DUB, or DNA-binding activities (PubMed:33864814). SGF29 specifically recognizes and binds methylated 'Lys-4' of histone H3 (H3K4me), with a preference for trimethylated form (H3K4me3) (PubMed:21685874). Component of the ADA histone acetyltransferase complex, which preferentially acetylates nucleosomal histones H3 (to form H3K14ac and H3K18ac) and H2B (PubMed:10026213). SGF29 is also required for heterochromatin boundary formation function, prevention of the spread of gene silencing at the HMR locus (PubMed:24307402).</text>
</comment>
<comment type="subunit">
    <text evidence="5 7 8 9 10 12 14">Component of the 1.8 MDa SAGA (Spt-Ada-Gcn5 acetyltransferase) complex, which is composed of 19 subunits TRA1, SPT7, TAF5, NGG1/ADA3, SGF73, SPT20/ADA5, SPT8, TAF12, TAF6, HFI1/ADA1, UBP8, GCN5, ADA2, SPT3, SGF29, TAF10, TAF9, SGF11 and SUS1 (PubMed:12052880). The SAGA complex is composed of 4 modules, namely the HAT (histone acetyltransferase) module (GCN5, ADA2, NGG1/ADA3 and SGF29), the DUB (deubiquitinating) module (UBP8, SGF11, SGF73 and SUS1), the core or TAF (TBP-associated factor) module (TAF5, TAF6, TAF9, TAF10 and TAF12), and the Tra1 or SPT (Suppressor of Ty) module (TRA1, HFI1/ADA1, SPT3, SPT7, SPT8 and SPT20/ADA5). The Tra1/SPT module binds activators, the core module recruits TBP (TATA-binding protein), the HAT module contains the histone H3 acetyltransferase GCN5, and the DUB module comprises the histone H2B deubiquitinase UBP8 (PubMed:25216679). Also identified in an altered form of SAGA, named SALSA (SAGA altered, Spt8 absent) or SLIK (SAGA-like) complex, which contains a C-terminal truncated form of SPT7 and is missing SPT8 (PubMed:15647753). However, it has been shown that the SAGA and SAGA-like SALSA/SLIK transcriptional coactivators are structurally and biochemically equivalent (PubMed:33864814). Interacts with dimethylated and trimethylated 'Lys-4' of histone H3 (H3K4me2 and H3K4me3), with a preference for the trimethylated form (H3K4me3) (PubMed:21685874). Component of the 0.8 MDa ADA complex, a HAT complex distinct from SAGA, which at least consists of ADA2, NGG1/ADA3, AHC1, AHC2, SGF29 and GCN5 (PubMed:21734642, PubMed:22224423).</text>
</comment>
<comment type="interaction">
    <interactant intactId="EBI-21678">
        <id>P25554</id>
    </interactant>
    <interactant intactId="EBI-8287">
        <id>Q12060</id>
        <label>HFI1</label>
    </interactant>
    <organismsDiffer>false</organismsDiffer>
    <experiments>10</experiments>
</comment>
<comment type="interaction">
    <interactant intactId="EBI-21678">
        <id>P25554</id>
    </interactant>
    <interactant intactId="EBI-2192">
        <id>P32494</id>
        <label>NGG1</label>
    </interactant>
    <organismsDiffer>false</organismsDiffer>
    <experiments>6</experiments>
</comment>
<comment type="interaction">
    <interactant intactId="EBI-21678">
        <id>P25554</id>
    </interactant>
    <interactant intactId="EBI-79722">
        <id>P68431</id>
        <label>H3C12</label>
    </interactant>
    <organismsDiffer>true</organismsDiffer>
    <experiments>11</experiments>
</comment>
<comment type="subcellular location">
    <subcellularLocation>
        <location evidence="15">Nucleus</location>
    </subcellularLocation>
</comment>
<comment type="domain">
    <text evidence="1 8">The SGF29 C-terminal (also named tudor-like) domain mediates binding to methylated 'Lys-4' of histone H3 (H3K4me).</text>
</comment>
<comment type="miscellaneous">
    <text evidence="6">Present with 1750 molecules/cell in log phase SD medium.</text>
</comment>
<comment type="similarity">
    <text evidence="1">Belongs to the SGF29 family.</text>
</comment>
<organism>
    <name type="scientific">Saccharomyces cerevisiae (strain ATCC 204508 / S288c)</name>
    <name type="common">Baker's yeast</name>
    <dbReference type="NCBI Taxonomy" id="559292"/>
    <lineage>
        <taxon>Eukaryota</taxon>
        <taxon>Fungi</taxon>
        <taxon>Dikarya</taxon>
        <taxon>Ascomycota</taxon>
        <taxon>Saccharomycotina</taxon>
        <taxon>Saccharomycetes</taxon>
        <taxon>Saccharomycetales</taxon>
        <taxon>Saccharomycetaceae</taxon>
        <taxon>Saccharomyces</taxon>
    </lineage>
</organism>
<evidence type="ECO:0000255" key="1">
    <source>
        <dbReference type="PROSITE-ProRule" id="PRU00851"/>
    </source>
</evidence>
<evidence type="ECO:0000256" key="2">
    <source>
        <dbReference type="SAM" id="MobiDB-lite"/>
    </source>
</evidence>
<evidence type="ECO:0000269" key="3">
    <source>
    </source>
</evidence>
<evidence type="ECO:0000269" key="4">
    <source>
    </source>
</evidence>
<evidence type="ECO:0000269" key="5">
    <source>
    </source>
</evidence>
<evidence type="ECO:0000269" key="6">
    <source>
    </source>
</evidence>
<evidence type="ECO:0000269" key="7">
    <source>
    </source>
</evidence>
<evidence type="ECO:0000269" key="8">
    <source>
    </source>
</evidence>
<evidence type="ECO:0000269" key="9">
    <source>
    </source>
</evidence>
<evidence type="ECO:0000269" key="10">
    <source>
    </source>
</evidence>
<evidence type="ECO:0000269" key="11">
    <source>
    </source>
</evidence>
<evidence type="ECO:0000269" key="12">
    <source>
    </source>
</evidence>
<evidence type="ECO:0000269" key="13">
    <source>
    </source>
</evidence>
<evidence type="ECO:0000269" key="14">
    <source>
    </source>
</evidence>
<evidence type="ECO:0000305" key="15"/>
<evidence type="ECO:0007744" key="16">
    <source>
        <dbReference type="PDB" id="3MP1"/>
    </source>
</evidence>
<evidence type="ECO:0007744" key="17">
    <source>
        <dbReference type="PDB" id="3MP6"/>
    </source>
</evidence>
<evidence type="ECO:0007744" key="18">
    <source>
        <dbReference type="PDB" id="3MP8"/>
    </source>
</evidence>
<evidence type="ECO:0007744" key="19">
    <source>
    </source>
</evidence>
<evidence type="ECO:0007744" key="20">
    <source>
    </source>
</evidence>
<evidence type="ECO:0007744" key="21">
    <source>
    </source>
</evidence>
<evidence type="ECO:0007744" key="22">
    <source>
    </source>
</evidence>
<evidence type="ECO:0007829" key="23">
    <source>
        <dbReference type="PDB" id="3MP1"/>
    </source>
</evidence>
<evidence type="ECO:0007829" key="24">
    <source>
        <dbReference type="PDB" id="3MP6"/>
    </source>
</evidence>
<evidence type="ECO:0007829" key="25">
    <source>
        <dbReference type="PDB" id="3MP8"/>
    </source>
</evidence>
<name>SGF29_YEAST</name>
<sequence length="259" mass="29381">MDGYWDVVVSSLQDIYNANEVIPFDDELQTKKLNFLNMSKDQLQLHLNTFQEHMENVNRVHRILDNVRSNLSLMLNQSREEKSEENTEDAEEGEGTRMALSQGKKAVGKVGRSYWTSEYNPNAPILVGSEVAYKPRRGSADGEWIQCEVLKVVADGTRFEVRDPEPDELGNSGKVYKCNRKELLLIPPGFPTKNYPPGTKVLARYPETTTFYPAIVIGTKRDGTCRLRFDGEEEVDKETEVTRRLVLPSPTALANLARK</sequence>
<dbReference type="EMBL" id="X59720">
    <property type="protein sequence ID" value="CAA42349.1"/>
    <property type="molecule type" value="Genomic_DNA"/>
</dbReference>
<dbReference type="EMBL" id="BK006937">
    <property type="protein sequence ID" value="DAA07471.1"/>
    <property type="molecule type" value="Genomic_DNA"/>
</dbReference>
<dbReference type="PIR" id="S74287">
    <property type="entry name" value="S74287"/>
</dbReference>
<dbReference type="RefSeq" id="NP_009917.1">
    <property type="nucleotide sequence ID" value="NM_001178659.1"/>
</dbReference>
<dbReference type="PDB" id="3MP1">
    <property type="method" value="X-ray"/>
    <property type="resolution" value="2.60 A"/>
    <property type="chains" value="A=111-259"/>
</dbReference>
<dbReference type="PDB" id="3MP6">
    <property type="method" value="X-ray"/>
    <property type="resolution" value="1.48 A"/>
    <property type="chains" value="A=111-259"/>
</dbReference>
<dbReference type="PDB" id="3MP8">
    <property type="method" value="X-ray"/>
    <property type="resolution" value="1.92 A"/>
    <property type="chains" value="A=111-259"/>
</dbReference>
<dbReference type="PDBsum" id="3MP1"/>
<dbReference type="PDBsum" id="3MP6"/>
<dbReference type="PDBsum" id="3MP8"/>
<dbReference type="SMR" id="P25554"/>
<dbReference type="BioGRID" id="30971">
    <property type="interactions" value="578"/>
</dbReference>
<dbReference type="ComplexPortal" id="CPX-608">
    <property type="entry name" value="ADA complex"/>
</dbReference>
<dbReference type="ComplexPortal" id="CPX-656">
    <property type="entry name" value="SAGA complex"/>
</dbReference>
<dbReference type="ComplexPortal" id="CPX-675">
    <property type="entry name" value="SLIK (SAGA-like) complex"/>
</dbReference>
<dbReference type="DIP" id="DIP-4871N"/>
<dbReference type="FunCoup" id="P25554">
    <property type="interactions" value="507"/>
</dbReference>
<dbReference type="IntAct" id="P25554">
    <property type="interactions" value="93"/>
</dbReference>
<dbReference type="MINT" id="P25554"/>
<dbReference type="STRING" id="4932.YCL010C"/>
<dbReference type="iPTMnet" id="P25554"/>
<dbReference type="PaxDb" id="4932-YCL010C"/>
<dbReference type="PeptideAtlas" id="P25554"/>
<dbReference type="DNASU" id="850347"/>
<dbReference type="EnsemblFungi" id="YCL010C_mRNA">
    <property type="protein sequence ID" value="YCL010C"/>
    <property type="gene ID" value="YCL010C"/>
</dbReference>
<dbReference type="GeneID" id="850347"/>
<dbReference type="KEGG" id="sce:YCL010C"/>
<dbReference type="AGR" id="SGD:S000000516"/>
<dbReference type="SGD" id="S000000516">
    <property type="gene designation" value="SGF29"/>
</dbReference>
<dbReference type="VEuPathDB" id="FungiDB:YCL010C"/>
<dbReference type="eggNOG" id="KOG3038">
    <property type="taxonomic scope" value="Eukaryota"/>
</dbReference>
<dbReference type="GeneTree" id="ENSGT00390000015229"/>
<dbReference type="HOGENOM" id="CLU_023535_2_0_1"/>
<dbReference type="InParanoid" id="P25554"/>
<dbReference type="OMA" id="VGRSYWT"/>
<dbReference type="OrthoDB" id="10265994at2759"/>
<dbReference type="BioCyc" id="YEAST:G3O-29279-MONOMER"/>
<dbReference type="BioGRID-ORCS" id="850347">
    <property type="hits" value="8 hits in 10 CRISPR screens"/>
</dbReference>
<dbReference type="EvolutionaryTrace" id="P25554"/>
<dbReference type="PRO" id="PR:P25554"/>
<dbReference type="Proteomes" id="UP000002311">
    <property type="component" value="Chromosome III"/>
</dbReference>
<dbReference type="RNAct" id="P25554">
    <property type="molecule type" value="protein"/>
</dbReference>
<dbReference type="GO" id="GO:0140671">
    <property type="term" value="C:ADA complex"/>
    <property type="evidence" value="ECO:0000315"/>
    <property type="project" value="SGD"/>
</dbReference>
<dbReference type="GO" id="GO:0005634">
    <property type="term" value="C:nucleus"/>
    <property type="evidence" value="ECO:0000303"/>
    <property type="project" value="ComplexPortal"/>
</dbReference>
<dbReference type="GO" id="GO:0000124">
    <property type="term" value="C:SAGA complex"/>
    <property type="evidence" value="ECO:0000314"/>
    <property type="project" value="SGD"/>
</dbReference>
<dbReference type="GO" id="GO:0046695">
    <property type="term" value="C:SLIK (SAGA-like) complex"/>
    <property type="evidence" value="ECO:0000353"/>
    <property type="project" value="ComplexPortal"/>
</dbReference>
<dbReference type="GO" id="GO:0035064">
    <property type="term" value="F:methylated histone binding"/>
    <property type="evidence" value="ECO:0000314"/>
    <property type="project" value="SGD"/>
</dbReference>
<dbReference type="GO" id="GO:0006325">
    <property type="term" value="P:chromatin organization"/>
    <property type="evidence" value="ECO:0007669"/>
    <property type="project" value="UniProtKB-KW"/>
</dbReference>
<dbReference type="GO" id="GO:0045944">
    <property type="term" value="P:positive regulation of transcription by RNA polymerase II"/>
    <property type="evidence" value="ECO:0000315"/>
    <property type="project" value="SGD"/>
</dbReference>
<dbReference type="GO" id="GO:0008104">
    <property type="term" value="P:protein localization"/>
    <property type="evidence" value="ECO:0000315"/>
    <property type="project" value="SGD"/>
</dbReference>
<dbReference type="GO" id="GO:0006357">
    <property type="term" value="P:regulation of transcription by RNA polymerase II"/>
    <property type="evidence" value="ECO:0000314"/>
    <property type="project" value="ComplexPortal"/>
</dbReference>
<dbReference type="GO" id="GO:0072742">
    <property type="term" value="P:SAGA complex localization to transcription regulatory region"/>
    <property type="evidence" value="ECO:0000315"/>
    <property type="project" value="SGD"/>
</dbReference>
<dbReference type="CDD" id="cd20393">
    <property type="entry name" value="Tudor_SGF29_rpt1"/>
    <property type="match status" value="1"/>
</dbReference>
<dbReference type="CDD" id="cd20394">
    <property type="entry name" value="Tudor_SGF29_rpt2"/>
    <property type="match status" value="1"/>
</dbReference>
<dbReference type="FunFam" id="2.30.30.140:FF:000055">
    <property type="entry name" value="SAGA complex component"/>
    <property type="match status" value="1"/>
</dbReference>
<dbReference type="Gene3D" id="2.30.30.140">
    <property type="match status" value="2"/>
</dbReference>
<dbReference type="IDEAL" id="IID50141"/>
<dbReference type="InterPro" id="IPR037802">
    <property type="entry name" value="SGF29"/>
</dbReference>
<dbReference type="InterPro" id="IPR010750">
    <property type="entry name" value="SGF29_tudor-like_dom"/>
</dbReference>
<dbReference type="InterPro" id="IPR047288">
    <property type="entry name" value="Tudor_SGF29_rpt1"/>
</dbReference>
<dbReference type="InterPro" id="IPR047287">
    <property type="entry name" value="Tudor_SGF29_rpt2"/>
</dbReference>
<dbReference type="PANTHER" id="PTHR21539">
    <property type="entry name" value="SAGA-ASSOCIATED FACTOR 29"/>
    <property type="match status" value="1"/>
</dbReference>
<dbReference type="PANTHER" id="PTHR21539:SF0">
    <property type="entry name" value="SAGA-ASSOCIATED FACTOR 29"/>
    <property type="match status" value="1"/>
</dbReference>
<dbReference type="Pfam" id="PF07039">
    <property type="entry name" value="SGF29_Tudor"/>
    <property type="match status" value="1"/>
</dbReference>
<dbReference type="PROSITE" id="PS51518">
    <property type="entry name" value="SGF29_C"/>
    <property type="match status" value="1"/>
</dbReference>